<feature type="chain" id="PRO_0000456800" description="Diguanylate cyclase DgcS">
    <location>
        <begin position="1"/>
        <end position="296"/>
    </location>
</feature>
<feature type="domain" description="GGDEF" evidence="3">
    <location>
        <begin position="165"/>
        <end position="293"/>
    </location>
</feature>
<feature type="active site" evidence="2">
    <location>
        <position position="216"/>
    </location>
</feature>
<feature type="binding site" evidence="1">
    <location>
        <position position="173"/>
    </location>
    <ligand>
        <name>Mg(2+)</name>
        <dbReference type="ChEBI" id="CHEBI:18420"/>
    </ligand>
</feature>
<feature type="binding site" evidence="1">
    <location>
        <position position="174"/>
    </location>
    <ligand>
        <name>Mg(2+)</name>
        <dbReference type="ChEBI" id="CHEBI:18420"/>
    </ligand>
</feature>
<feature type="binding site" evidence="1">
    <location>
        <position position="216"/>
    </location>
    <ligand>
        <name>Mg(2+)</name>
        <dbReference type="ChEBI" id="CHEBI:18420"/>
    </ligand>
</feature>
<feature type="site" description="Transition state stabilizer" evidence="2">
    <location>
        <position position="178"/>
    </location>
</feature>
<reference key="1">
    <citation type="journal article" date="2002" name="Nat. Biotechnol.">
        <title>Genome sequence of the dissimilatory metal ion-reducing bacterium Shewanella oneidensis.</title>
        <authorList>
            <person name="Heidelberg J.F."/>
            <person name="Paulsen I.T."/>
            <person name="Nelson K.E."/>
            <person name="Gaidos E.J."/>
            <person name="Nelson W.C."/>
            <person name="Read T.D."/>
            <person name="Eisen J.A."/>
            <person name="Seshadri R."/>
            <person name="Ward N.L."/>
            <person name="Methe B.A."/>
            <person name="Clayton R.A."/>
            <person name="Meyer T."/>
            <person name="Tsapin A."/>
            <person name="Scott J."/>
            <person name="Beanan M.J."/>
            <person name="Brinkac L.M."/>
            <person name="Daugherty S.C."/>
            <person name="DeBoy R.T."/>
            <person name="Dodson R.J."/>
            <person name="Durkin A.S."/>
            <person name="Haft D.H."/>
            <person name="Kolonay J.F."/>
            <person name="Madupu R."/>
            <person name="Peterson J.D."/>
            <person name="Umayam L.A."/>
            <person name="White O."/>
            <person name="Wolf A.M."/>
            <person name="Vamathevan J.J."/>
            <person name="Weidman J.F."/>
            <person name="Impraim M."/>
            <person name="Lee K."/>
            <person name="Berry K.J."/>
            <person name="Lee C."/>
            <person name="Mueller J."/>
            <person name="Khouri H.M."/>
            <person name="Gill J."/>
            <person name="Utterback T.R."/>
            <person name="McDonald L.A."/>
            <person name="Feldblyum T.V."/>
            <person name="Smith H.O."/>
            <person name="Venter J.C."/>
            <person name="Nealson K.H."/>
            <person name="Fraser C.M."/>
        </authorList>
    </citation>
    <scope>NUCLEOTIDE SEQUENCE [LARGE SCALE GENOMIC DNA]</scope>
    <source>
        <strain>ATCC 700550 / JCM 31522 / CIP 106686 / LMG 19005 / NCIMB 14063 / MR-1</strain>
    </source>
</reference>
<reference key="2">
    <citation type="journal article" date="2021" name="Appl. Environ. Microbiol.">
        <title>Identification of a diguanylate cyclase that facilitates biofilm formation on electrodes by Shewanella oneidensis MR-1.</title>
        <authorList>
            <person name="Matsumoto A."/>
            <person name="Koga R."/>
            <person name="Kanaly R.A."/>
            <person name="Kouzuma A."/>
            <person name="Watanabe K."/>
        </authorList>
    </citation>
    <scope>FUNCTION</scope>
    <scope>CATALYTIC ACTIVITY</scope>
    <scope>INDUCTION</scope>
    <scope>DISRUPTION PHENOTYPE</scope>
    <scope>BIOTECHNOLOGY</scope>
    <source>
        <strain>ATCC 700550 / JCM 31522 / CIP 106686 / LMG 19005 / NCIMB 14063 / MR-1</strain>
    </source>
</reference>
<protein>
    <recommendedName>
        <fullName evidence="5">Diguanylate cyclase DgcS</fullName>
        <shortName evidence="5">DGC</shortName>
        <ecNumber evidence="4">2.7.7.65</ecNumber>
    </recommendedName>
</protein>
<name>DGCS_SHEON</name>
<organism>
    <name type="scientific">Shewanella oneidensis (strain ATCC 700550 / JCM 31522 / CIP 106686 / LMG 19005 / NCIMB 14063 / MR-1)</name>
    <dbReference type="NCBI Taxonomy" id="211586"/>
    <lineage>
        <taxon>Bacteria</taxon>
        <taxon>Pseudomonadati</taxon>
        <taxon>Pseudomonadota</taxon>
        <taxon>Gammaproteobacteria</taxon>
        <taxon>Alteromonadales</taxon>
        <taxon>Shewanellaceae</taxon>
        <taxon>Shewanella</taxon>
    </lineage>
</organism>
<gene>
    <name evidence="5" type="primary">dgcS</name>
    <name evidence="7" type="ordered locus">SO_1646</name>
</gene>
<dbReference type="EC" id="2.7.7.65" evidence="4"/>
<dbReference type="EMBL" id="AE014299">
    <property type="protein sequence ID" value="AAN54701.1"/>
    <property type="molecule type" value="Genomic_DNA"/>
</dbReference>
<dbReference type="RefSeq" id="NP_717257.1">
    <property type="nucleotide sequence ID" value="NC_004347.2"/>
</dbReference>
<dbReference type="RefSeq" id="WP_011071801.1">
    <property type="nucleotide sequence ID" value="NC_004347.2"/>
</dbReference>
<dbReference type="SMR" id="Q8EGF8"/>
<dbReference type="STRING" id="211586.SO_1646"/>
<dbReference type="PaxDb" id="211586-SO_1646"/>
<dbReference type="KEGG" id="son:SO_1646"/>
<dbReference type="PATRIC" id="fig|211586.12.peg.1585"/>
<dbReference type="eggNOG" id="COG2199">
    <property type="taxonomic scope" value="Bacteria"/>
</dbReference>
<dbReference type="HOGENOM" id="CLU_000445_11_5_6"/>
<dbReference type="OrthoDB" id="9812260at2"/>
<dbReference type="PhylomeDB" id="Q8EGF8"/>
<dbReference type="BioCyc" id="SONE211586:G1GMP-1516-MONOMER"/>
<dbReference type="Proteomes" id="UP000008186">
    <property type="component" value="Chromosome"/>
</dbReference>
<dbReference type="GO" id="GO:0005886">
    <property type="term" value="C:plasma membrane"/>
    <property type="evidence" value="ECO:0000318"/>
    <property type="project" value="GO_Central"/>
</dbReference>
<dbReference type="GO" id="GO:0052621">
    <property type="term" value="F:diguanylate cyclase activity"/>
    <property type="evidence" value="ECO:0000318"/>
    <property type="project" value="GO_Central"/>
</dbReference>
<dbReference type="GO" id="GO:0005525">
    <property type="term" value="F:GTP binding"/>
    <property type="evidence" value="ECO:0007669"/>
    <property type="project" value="UniProtKB-KW"/>
</dbReference>
<dbReference type="GO" id="GO:0046872">
    <property type="term" value="F:metal ion binding"/>
    <property type="evidence" value="ECO:0007669"/>
    <property type="project" value="UniProtKB-KW"/>
</dbReference>
<dbReference type="GO" id="GO:0043709">
    <property type="term" value="P:cell adhesion involved in single-species biofilm formation"/>
    <property type="evidence" value="ECO:0000318"/>
    <property type="project" value="GO_Central"/>
</dbReference>
<dbReference type="GO" id="GO:1902201">
    <property type="term" value="P:negative regulation of bacterial-type flagellum-dependent cell motility"/>
    <property type="evidence" value="ECO:0000318"/>
    <property type="project" value="GO_Central"/>
</dbReference>
<dbReference type="CDD" id="cd01949">
    <property type="entry name" value="GGDEF"/>
    <property type="match status" value="1"/>
</dbReference>
<dbReference type="FunFam" id="3.30.70.270:FF:000001">
    <property type="entry name" value="Diguanylate cyclase domain protein"/>
    <property type="match status" value="1"/>
</dbReference>
<dbReference type="Gene3D" id="3.30.70.270">
    <property type="match status" value="1"/>
</dbReference>
<dbReference type="InterPro" id="IPR050469">
    <property type="entry name" value="Diguanylate_Cyclase"/>
</dbReference>
<dbReference type="InterPro" id="IPR000160">
    <property type="entry name" value="GGDEF_dom"/>
</dbReference>
<dbReference type="InterPro" id="IPR029787">
    <property type="entry name" value="Nucleotide_cyclase"/>
</dbReference>
<dbReference type="InterPro" id="IPR043128">
    <property type="entry name" value="Rev_trsase/Diguanyl_cyclase"/>
</dbReference>
<dbReference type="NCBIfam" id="TIGR00254">
    <property type="entry name" value="GGDEF"/>
    <property type="match status" value="1"/>
</dbReference>
<dbReference type="PANTHER" id="PTHR45138:SF6">
    <property type="entry name" value="DIGUANYLATE CYCLASE DGCN"/>
    <property type="match status" value="1"/>
</dbReference>
<dbReference type="PANTHER" id="PTHR45138">
    <property type="entry name" value="REGULATORY COMPONENTS OF SENSORY TRANSDUCTION SYSTEM"/>
    <property type="match status" value="1"/>
</dbReference>
<dbReference type="Pfam" id="PF00990">
    <property type="entry name" value="GGDEF"/>
    <property type="match status" value="1"/>
</dbReference>
<dbReference type="SMART" id="SM00267">
    <property type="entry name" value="GGDEF"/>
    <property type="match status" value="1"/>
</dbReference>
<dbReference type="SUPFAM" id="SSF55073">
    <property type="entry name" value="Nucleotide cyclase"/>
    <property type="match status" value="1"/>
</dbReference>
<dbReference type="PROSITE" id="PS50887">
    <property type="entry name" value="GGDEF"/>
    <property type="match status" value="1"/>
</dbReference>
<accession>Q8EGF8</accession>
<keyword id="KW-0342">GTP-binding</keyword>
<keyword id="KW-0460">Magnesium</keyword>
<keyword id="KW-0479">Metal-binding</keyword>
<keyword id="KW-0547">Nucleotide-binding</keyword>
<keyword id="KW-1185">Reference proteome</keyword>
<keyword id="KW-0808">Transferase</keyword>
<sequence length="296" mass="32924">MDFGLATTLYPDEYNYQTDAYSPTSSPVDLVQVIQQLHASLDPRTVFACYGKVLGQHLPIQGVRLQSEQHKLSWGKRYGISLKRQIICGGTPLTLQYQLLTPLTPSQSICLQEIEPLLLQPLLNAMQYQEMSMQAMFDALTGLGNRHYYSQSLKNAVARAQRKQGSVSLIVLDLDNFKKLNDKYGHKCGDYILKEFGDIIRSSIRSTDQAFRIGGDEFVVIVQGNIHAAGLLCERIVSATNTHASFHQFGVSCSLGAAEASETMEAEQLYEQADKTLYQAKASGRNCYKLSPTQLS</sequence>
<evidence type="ECO:0000250" key="1">
    <source>
        <dbReference type="UniProtKB" id="P31129"/>
    </source>
</evidence>
<evidence type="ECO:0000255" key="2"/>
<evidence type="ECO:0000255" key="3">
    <source>
        <dbReference type="PROSITE-ProRule" id="PRU00095"/>
    </source>
</evidence>
<evidence type="ECO:0000269" key="4">
    <source>
    </source>
</evidence>
<evidence type="ECO:0000303" key="5">
    <source>
    </source>
</evidence>
<evidence type="ECO:0000305" key="6">
    <source>
    </source>
</evidence>
<evidence type="ECO:0000312" key="7">
    <source>
        <dbReference type="EMBL" id="AAN54701.1"/>
    </source>
</evidence>
<comment type="function">
    <text evidence="4">Catalyzes the synthesis of cyclic-di-GMP (c-di-GMP) via the condensation of 2 GTP molecules (PubMed:33637573). May be involved in the regulation of formation of solid surface-associated biofilms and pellicles according to environmental conditions (PubMed:33637573).</text>
</comment>
<comment type="catalytic activity">
    <reaction evidence="4">
        <text>2 GTP = 3',3'-c-di-GMP + 2 diphosphate</text>
        <dbReference type="Rhea" id="RHEA:24898"/>
        <dbReference type="ChEBI" id="CHEBI:33019"/>
        <dbReference type="ChEBI" id="CHEBI:37565"/>
        <dbReference type="ChEBI" id="CHEBI:58805"/>
        <dbReference type="EC" id="2.7.7.65"/>
    </reaction>
    <physiologicalReaction direction="left-to-right" evidence="6">
        <dbReference type="Rhea" id="RHEA:24899"/>
    </physiologicalReaction>
</comment>
<comment type="cofactor">
    <cofactor evidence="1">
        <name>Mg(2+)</name>
        <dbReference type="ChEBI" id="CHEBI:18420"/>
    </cofactor>
    <text evidence="1">Binds 1 Mg(2+) ion per monomer.</text>
</comment>
<comment type="induction">
    <text evidence="4">Expression is up-regulated under medium flow conditions in electrochemical flow cells (EFCs).</text>
</comment>
<comment type="disruption phenotype">
    <text evidence="4">Deletion of the gene does not affect the growth of MR-1 in batch cultures, but it leads to a strong reduction of c-di-GMP production (PubMed:33637573). It also results in impaired biofilm formation and decreased current generation during growth on electrode surfaces (PubMed:33637573).</text>
</comment>
<comment type="biotechnology">
    <text evidence="4">Shewanella oneidensis MR-1 are electrochemically active bacteria (EAB) that form biofilms during growth on electrode surfaces, thereby functioning as effective catalysts for the interconversion between electric and chemical energy (PubMed:33637573). DgcS synthesizes c-di-GMP under medium flow conditions, which activates the formation of biofilms on electrodes via c-di-GMP-dependent signal transduction cascades (PubMed:33637573).</text>
</comment>
<proteinExistence type="evidence at protein level"/>